<keyword id="KW-0028">Amino-acid biosynthesis</keyword>
<keyword id="KW-0057">Aromatic amino acid biosynthesis</keyword>
<keyword id="KW-0274">FAD</keyword>
<keyword id="KW-0285">Flavoprotein</keyword>
<keyword id="KW-0288">FMN</keyword>
<keyword id="KW-0456">Lyase</keyword>
<keyword id="KW-0521">NADP</keyword>
<keyword id="KW-1185">Reference proteome</keyword>
<comment type="function">
    <text evidence="1">Catalyzes the anti-1,4-elimination of the C-3 phosphate and the C-6 proR hydrogen from 5-enolpyruvylshikimate-3-phosphate (EPSP) to yield chorismate, which is the branch point compound that serves as the starting substrate for the three terminal pathways of aromatic amino acid biosynthesis. This reaction introduces a second double bond into the aromatic ring system.</text>
</comment>
<comment type="catalytic activity">
    <reaction evidence="1">
        <text>5-O-(1-carboxyvinyl)-3-phosphoshikimate = chorismate + phosphate</text>
        <dbReference type="Rhea" id="RHEA:21020"/>
        <dbReference type="ChEBI" id="CHEBI:29748"/>
        <dbReference type="ChEBI" id="CHEBI:43474"/>
        <dbReference type="ChEBI" id="CHEBI:57701"/>
        <dbReference type="EC" id="4.2.3.5"/>
    </reaction>
</comment>
<comment type="cofactor">
    <cofactor evidence="1">
        <name>FMNH2</name>
        <dbReference type="ChEBI" id="CHEBI:57618"/>
    </cofactor>
    <text evidence="1">Reduced FMN (FMNH(2)).</text>
</comment>
<comment type="pathway">
    <text evidence="1">Metabolic intermediate biosynthesis; chorismate biosynthesis; chorismate from D-erythrose 4-phosphate and phosphoenolpyruvate: step 7/7.</text>
</comment>
<comment type="subunit">
    <text evidence="1">Homotetramer.</text>
</comment>
<comment type="similarity">
    <text evidence="1">Belongs to the chorismate synthase family.</text>
</comment>
<reference key="1">
    <citation type="journal article" date="2009" name="J. Bacteriol.">
        <title>Genome sequences of three Agrobacterium biovars help elucidate the evolution of multichromosome genomes in bacteria.</title>
        <authorList>
            <person name="Slater S.C."/>
            <person name="Goldman B.S."/>
            <person name="Goodner B."/>
            <person name="Setubal J.C."/>
            <person name="Farrand S.K."/>
            <person name="Nester E.W."/>
            <person name="Burr T.J."/>
            <person name="Banta L."/>
            <person name="Dickerman A.W."/>
            <person name="Paulsen I."/>
            <person name="Otten L."/>
            <person name="Suen G."/>
            <person name="Welch R."/>
            <person name="Almeida N.F."/>
            <person name="Arnold F."/>
            <person name="Burton O.T."/>
            <person name="Du Z."/>
            <person name="Ewing A."/>
            <person name="Godsy E."/>
            <person name="Heisel S."/>
            <person name="Houmiel K.L."/>
            <person name="Jhaveri J."/>
            <person name="Lu J."/>
            <person name="Miller N.M."/>
            <person name="Norton S."/>
            <person name="Chen Q."/>
            <person name="Phoolcharoen W."/>
            <person name="Ohlin V."/>
            <person name="Ondrusek D."/>
            <person name="Pride N."/>
            <person name="Stricklin S.L."/>
            <person name="Sun J."/>
            <person name="Wheeler C."/>
            <person name="Wilson L."/>
            <person name="Zhu H."/>
            <person name="Wood D.W."/>
        </authorList>
    </citation>
    <scope>NUCLEOTIDE SEQUENCE [LARGE SCALE GENOMIC DNA]</scope>
    <source>
        <strain>ATCC BAA-846 / DSM 112012 / S4</strain>
    </source>
</reference>
<protein>
    <recommendedName>
        <fullName evidence="1">Chorismate synthase</fullName>
        <shortName evidence="1">CS</shortName>
        <ecNumber evidence="1">4.2.3.5</ecNumber>
    </recommendedName>
    <alternativeName>
        <fullName evidence="1">5-enolpyruvylshikimate-3-phosphate phospholyase</fullName>
    </alternativeName>
</protein>
<feature type="chain" id="PRO_1000132750" description="Chorismate synthase">
    <location>
        <begin position="1"/>
        <end position="364"/>
    </location>
</feature>
<feature type="binding site" evidence="1">
    <location>
        <position position="48"/>
    </location>
    <ligand>
        <name>NADP(+)</name>
        <dbReference type="ChEBI" id="CHEBI:58349"/>
    </ligand>
</feature>
<feature type="binding site" evidence="1">
    <location>
        <position position="54"/>
    </location>
    <ligand>
        <name>NADP(+)</name>
        <dbReference type="ChEBI" id="CHEBI:58349"/>
    </ligand>
</feature>
<feature type="binding site" evidence="1">
    <location>
        <begin position="130"/>
        <end position="132"/>
    </location>
    <ligand>
        <name>FMN</name>
        <dbReference type="ChEBI" id="CHEBI:58210"/>
    </ligand>
</feature>
<feature type="binding site" evidence="1">
    <location>
        <begin position="242"/>
        <end position="243"/>
    </location>
    <ligand>
        <name>FMN</name>
        <dbReference type="ChEBI" id="CHEBI:58210"/>
    </ligand>
</feature>
<feature type="binding site" evidence="1">
    <location>
        <position position="287"/>
    </location>
    <ligand>
        <name>FMN</name>
        <dbReference type="ChEBI" id="CHEBI:58210"/>
    </ligand>
</feature>
<feature type="binding site" evidence="1">
    <location>
        <begin position="302"/>
        <end position="306"/>
    </location>
    <ligand>
        <name>FMN</name>
        <dbReference type="ChEBI" id="CHEBI:58210"/>
    </ligand>
</feature>
<feature type="binding site" evidence="1">
    <location>
        <position position="328"/>
    </location>
    <ligand>
        <name>FMN</name>
        <dbReference type="ChEBI" id="CHEBI:58210"/>
    </ligand>
</feature>
<sequence>MSHNSFGHLFRVTTWGESHGPALGAVVDGCPPGLKFTLEDLQVWLDKRKPGQSRFVTQRREDDLVKVLSGVMPQDDGSMITTGTPISLMIENTDQRSKDYGEIAQQYRPGHADYTYDLKYGIRDYRGGGRSSARETAARVAAGGIARLVLPGVTIRGALVQIGTHKIDRANWDWSEVDNNPFFAPDPKIVPVWEDYLDQIRKQGSSVGAVVEVVAEGVPAGLGAPIYAKLDQDITALLMSINAVKGVEIGNGFGAAEITGEENADQMRMGNDGQPIFLSNHAGGILGGISTGEPIVARFAIKPTSSILTERQSIDSQGRNVDIRTKGRHDPCVGIRAVPVGEAMVACALADHYLRDRGQTGRLK</sequence>
<accession>B9JSM6</accession>
<dbReference type="EC" id="4.2.3.5" evidence="1"/>
<dbReference type="EMBL" id="CP000633">
    <property type="protein sequence ID" value="ACM35719.1"/>
    <property type="molecule type" value="Genomic_DNA"/>
</dbReference>
<dbReference type="RefSeq" id="WP_015915143.1">
    <property type="nucleotide sequence ID" value="NC_011989.1"/>
</dbReference>
<dbReference type="SMR" id="B9JSM6"/>
<dbReference type="STRING" id="311402.Avi_1015"/>
<dbReference type="KEGG" id="avi:Avi_1015"/>
<dbReference type="eggNOG" id="COG0082">
    <property type="taxonomic scope" value="Bacteria"/>
</dbReference>
<dbReference type="HOGENOM" id="CLU_034547_0_0_5"/>
<dbReference type="UniPathway" id="UPA00053">
    <property type="reaction ID" value="UER00090"/>
</dbReference>
<dbReference type="Proteomes" id="UP000001596">
    <property type="component" value="Chromosome 1"/>
</dbReference>
<dbReference type="GO" id="GO:0005829">
    <property type="term" value="C:cytosol"/>
    <property type="evidence" value="ECO:0007669"/>
    <property type="project" value="TreeGrafter"/>
</dbReference>
<dbReference type="GO" id="GO:0004107">
    <property type="term" value="F:chorismate synthase activity"/>
    <property type="evidence" value="ECO:0007669"/>
    <property type="project" value="UniProtKB-UniRule"/>
</dbReference>
<dbReference type="GO" id="GO:0010181">
    <property type="term" value="F:FMN binding"/>
    <property type="evidence" value="ECO:0007669"/>
    <property type="project" value="TreeGrafter"/>
</dbReference>
<dbReference type="GO" id="GO:0008652">
    <property type="term" value="P:amino acid biosynthetic process"/>
    <property type="evidence" value="ECO:0007669"/>
    <property type="project" value="UniProtKB-KW"/>
</dbReference>
<dbReference type="GO" id="GO:0009073">
    <property type="term" value="P:aromatic amino acid family biosynthetic process"/>
    <property type="evidence" value="ECO:0007669"/>
    <property type="project" value="UniProtKB-KW"/>
</dbReference>
<dbReference type="GO" id="GO:0009423">
    <property type="term" value="P:chorismate biosynthetic process"/>
    <property type="evidence" value="ECO:0007669"/>
    <property type="project" value="UniProtKB-UniRule"/>
</dbReference>
<dbReference type="CDD" id="cd07304">
    <property type="entry name" value="Chorismate_synthase"/>
    <property type="match status" value="1"/>
</dbReference>
<dbReference type="Gene3D" id="3.60.150.10">
    <property type="entry name" value="Chorismate synthase AroC"/>
    <property type="match status" value="1"/>
</dbReference>
<dbReference type="HAMAP" id="MF_00300">
    <property type="entry name" value="Chorismate_synth"/>
    <property type="match status" value="1"/>
</dbReference>
<dbReference type="InterPro" id="IPR000453">
    <property type="entry name" value="Chorismate_synth"/>
</dbReference>
<dbReference type="InterPro" id="IPR035904">
    <property type="entry name" value="Chorismate_synth_AroC_sf"/>
</dbReference>
<dbReference type="InterPro" id="IPR020541">
    <property type="entry name" value="Chorismate_synthase_CS"/>
</dbReference>
<dbReference type="NCBIfam" id="TIGR00033">
    <property type="entry name" value="aroC"/>
    <property type="match status" value="1"/>
</dbReference>
<dbReference type="NCBIfam" id="NF003793">
    <property type="entry name" value="PRK05382.1"/>
    <property type="match status" value="1"/>
</dbReference>
<dbReference type="PANTHER" id="PTHR21085">
    <property type="entry name" value="CHORISMATE SYNTHASE"/>
    <property type="match status" value="1"/>
</dbReference>
<dbReference type="PANTHER" id="PTHR21085:SF0">
    <property type="entry name" value="CHORISMATE SYNTHASE"/>
    <property type="match status" value="1"/>
</dbReference>
<dbReference type="Pfam" id="PF01264">
    <property type="entry name" value="Chorismate_synt"/>
    <property type="match status" value="1"/>
</dbReference>
<dbReference type="PIRSF" id="PIRSF001456">
    <property type="entry name" value="Chorismate_synth"/>
    <property type="match status" value="1"/>
</dbReference>
<dbReference type="SUPFAM" id="SSF103263">
    <property type="entry name" value="Chorismate synthase, AroC"/>
    <property type="match status" value="1"/>
</dbReference>
<dbReference type="PROSITE" id="PS00787">
    <property type="entry name" value="CHORISMATE_SYNTHASE_1"/>
    <property type="match status" value="1"/>
</dbReference>
<dbReference type="PROSITE" id="PS00789">
    <property type="entry name" value="CHORISMATE_SYNTHASE_3"/>
    <property type="match status" value="1"/>
</dbReference>
<evidence type="ECO:0000255" key="1">
    <source>
        <dbReference type="HAMAP-Rule" id="MF_00300"/>
    </source>
</evidence>
<proteinExistence type="inferred from homology"/>
<organism>
    <name type="scientific">Allorhizobium ampelinum (strain ATCC BAA-846 / DSM 112012 / S4)</name>
    <name type="common">Agrobacterium vitis (strain S4)</name>
    <dbReference type="NCBI Taxonomy" id="311402"/>
    <lineage>
        <taxon>Bacteria</taxon>
        <taxon>Pseudomonadati</taxon>
        <taxon>Pseudomonadota</taxon>
        <taxon>Alphaproteobacteria</taxon>
        <taxon>Hyphomicrobiales</taxon>
        <taxon>Rhizobiaceae</taxon>
        <taxon>Rhizobium/Agrobacterium group</taxon>
        <taxon>Allorhizobium</taxon>
        <taxon>Allorhizobium ampelinum</taxon>
    </lineage>
</organism>
<gene>
    <name evidence="1" type="primary">aroC</name>
    <name type="ordered locus">Avi_1015</name>
</gene>
<name>AROC_ALLAM</name>